<reference key="1">
    <citation type="journal article" date="1999" name="J. Bacteriol.">
        <title>Distribution of tetrahydromethanopterin-dependent enzymes in methylotrophic bacteria and phylogeny of methenyl tetrahydromethanopterin cyclohydrolases.</title>
        <authorList>
            <person name="Vorholt J.A."/>
            <person name="Chistoserdova L.V."/>
            <person name="Stolyar S.M."/>
            <person name="Thauer R.K."/>
            <person name="Lidstrom M.E."/>
        </authorList>
    </citation>
    <scope>NUCLEOTIDE SEQUENCE [GENOMIC DNA]</scope>
    <source>
        <strain>IIIp</strain>
    </source>
</reference>
<evidence type="ECO:0000250" key="1"/>
<evidence type="ECO:0000305" key="2"/>
<gene>
    <name type="primary">mch</name>
</gene>
<feature type="chain" id="PRO_0000140895" description="Methenyltetrahydromethanopterin cyclohydrolase">
    <location>
        <begin position="1" status="less than"/>
        <end position="136" status="greater than"/>
    </location>
</feature>
<feature type="non-terminal residue">
    <location>
        <position position="1"/>
    </location>
</feature>
<feature type="non-terminal residue">
    <location>
        <position position="136"/>
    </location>
</feature>
<protein>
    <recommendedName>
        <fullName>Methenyltetrahydromethanopterin cyclohydrolase</fullName>
        <ecNumber>3.5.4.27</ecNumber>
    </recommendedName>
    <alternativeName>
        <fullName>Methenyl-H4MPT cyclohydrolase</fullName>
    </alternativeName>
</protein>
<proteinExistence type="inferred from homology"/>
<comment type="function">
    <text evidence="1">Catalyzes the hydrolysis of methenyl-H(4)MPT(+) to 5-formyl-H(4)MPT.</text>
</comment>
<comment type="catalytic activity">
    <reaction>
        <text>5,10-methenyl-5,6,7,8-tetrahydromethanopterin + H2O = N(5)-formyl-5,6,7,8-tetrahydromethanopterin + H(+)</text>
        <dbReference type="Rhea" id="RHEA:19053"/>
        <dbReference type="ChEBI" id="CHEBI:15377"/>
        <dbReference type="ChEBI" id="CHEBI:15378"/>
        <dbReference type="ChEBI" id="CHEBI:58018"/>
        <dbReference type="ChEBI" id="CHEBI:58337"/>
        <dbReference type="EC" id="3.5.4.27"/>
    </reaction>
</comment>
<comment type="pathway">
    <text>One-carbon metabolism; formaldehyde degradation; formate from formaldehyde (H(4)MPT route): step 3/5.</text>
</comment>
<comment type="subcellular location">
    <subcellularLocation>
        <location evidence="1">Cytoplasm</location>
    </subcellularLocation>
</comment>
<comment type="similarity">
    <text evidence="2">Belongs to the MCH family.</text>
</comment>
<sequence length="136" mass="14337">SLSHGEGKNAFYALGSGPARALATKVKDGNEEPVEELYKELGYRDHSNETAIVMEVDKVPPVEVIEKIAKACKVDASGVHVILTPTSSLAGGMQVVGRVLEVALHKAHSLHFPLGNIIDGTGTAPVPPPHPNFVKA</sequence>
<organism>
    <name type="scientific">Methylococcus thermophilus</name>
    <dbReference type="NCBI Taxonomy" id="53405"/>
    <lineage>
        <taxon>Bacteria</taxon>
        <taxon>Pseudomonadati</taxon>
        <taxon>Pseudomonadota</taxon>
        <taxon>Gammaproteobacteria</taxon>
        <taxon>Methylococcales</taxon>
        <taxon>Methylococcaceae</taxon>
        <taxon>Methylococcus</taxon>
    </lineage>
</organism>
<name>MCH_METTO</name>
<dbReference type="EC" id="3.5.4.27"/>
<dbReference type="EMBL" id="AF142654">
    <property type="protein sequence ID" value="AAD55904.1"/>
    <property type="molecule type" value="Genomic_DNA"/>
</dbReference>
<dbReference type="SMR" id="Q9RPW3"/>
<dbReference type="UniPathway" id="UPA00562">
    <property type="reaction ID" value="UER00703"/>
</dbReference>
<dbReference type="GO" id="GO:0005737">
    <property type="term" value="C:cytoplasm"/>
    <property type="evidence" value="ECO:0007669"/>
    <property type="project" value="UniProtKB-SubCell"/>
</dbReference>
<dbReference type="GO" id="GO:0018759">
    <property type="term" value="F:methenyltetrahydromethanopterin cyclohydrolase activity"/>
    <property type="evidence" value="ECO:0007669"/>
    <property type="project" value="UniProtKB-EC"/>
</dbReference>
<dbReference type="GO" id="GO:0046294">
    <property type="term" value="P:formaldehyde catabolic process"/>
    <property type="evidence" value="ECO:0007669"/>
    <property type="project" value="UniProtKB-UniPathway"/>
</dbReference>
<dbReference type="GO" id="GO:0006730">
    <property type="term" value="P:one-carbon metabolic process"/>
    <property type="evidence" value="ECO:0007669"/>
    <property type="project" value="UniProtKB-KW"/>
</dbReference>
<dbReference type="Gene3D" id="3.10.340.11">
    <property type="entry name" value="Methenyltetrahydromethanopterin Cyclohydrolase, Chain A, domain 1"/>
    <property type="match status" value="1"/>
</dbReference>
<dbReference type="Gene3D" id="3.30.1030.10">
    <property type="entry name" value="Methenyltetrahydromethanopterin Cyclohydrolase, Chain A, domain 2"/>
    <property type="match status" value="1"/>
</dbReference>
<dbReference type="InterPro" id="IPR003209">
    <property type="entry name" value="METHMP_CycHdrlase"/>
</dbReference>
<dbReference type="Pfam" id="PF02289">
    <property type="entry name" value="MCH"/>
    <property type="match status" value="1"/>
</dbReference>
<dbReference type="SUPFAM" id="SSF56199">
    <property type="entry name" value="Methenyltetrahydromethanopterin cyclohydrolase"/>
    <property type="match status" value="1"/>
</dbReference>
<accession>Q9RPW3</accession>
<keyword id="KW-0963">Cytoplasm</keyword>
<keyword id="KW-0378">Hydrolase</keyword>
<keyword id="KW-0554">One-carbon metabolism</keyword>